<gene>
    <name evidence="1" type="primary">murG</name>
    <name type="ordered locus">A1G_03170</name>
</gene>
<sequence>MKKIILVAGGTGGHFFPAVALGEELIKRGYEVHFITDLRCKQYIKQDMKVIFHILDLKRSGNIFLFLPRLSIAVLKAIKLLYNMKPSVTVGFGGYPVIAPMFAAIFLRVPIIIHEQNSYLGKVNKFFASFAKKIAISYEKIKNLPEFAKSKIVVTGGVVRENIRELKVIEMSSRGLTTGSKKSLIKALDSVVKPRHDKLFTIFIFGGSQGAKLFSELIPASIQILMQKQPSLELNIIQQAALDDQVKIKDIYSKLNITYEVAEFFDNMALQYKEADLVISRAGASTIEELTYIGLPAIFIPLPSAADNHQYYNAQLLADEKTGWCLEQNNISAGKLADKILDLISNPKILEDASQNLLKRRKEGHKLLSNLIEEVI</sequence>
<evidence type="ECO:0000255" key="1">
    <source>
        <dbReference type="HAMAP-Rule" id="MF_00033"/>
    </source>
</evidence>
<proteinExistence type="inferred from homology"/>
<reference key="1">
    <citation type="submission" date="2007-09" db="EMBL/GenBank/DDBJ databases">
        <title>Complete genome sequence of Rickettsia rickettsii.</title>
        <authorList>
            <person name="Madan A."/>
            <person name="Fahey J."/>
            <person name="Helton E."/>
            <person name="Ketteman M."/>
            <person name="Madan A."/>
            <person name="Rodrigues S."/>
            <person name="Sanchez A."/>
            <person name="Dasch G."/>
            <person name="Eremeeva M."/>
        </authorList>
    </citation>
    <scope>NUCLEOTIDE SEQUENCE [LARGE SCALE GENOMIC DNA]</scope>
    <source>
        <strain>Sheila Smith</strain>
    </source>
</reference>
<dbReference type="EC" id="2.4.1.227" evidence="1"/>
<dbReference type="EMBL" id="CP000848">
    <property type="protein sequence ID" value="ABV76171.1"/>
    <property type="molecule type" value="Genomic_DNA"/>
</dbReference>
<dbReference type="RefSeq" id="WP_012150758.1">
    <property type="nucleotide sequence ID" value="NZ_CP121767.1"/>
</dbReference>
<dbReference type="SMR" id="A8GRZ6"/>
<dbReference type="CAZy" id="GT28">
    <property type="family name" value="Glycosyltransferase Family 28"/>
</dbReference>
<dbReference type="GeneID" id="79937317"/>
<dbReference type="KEGG" id="rri:A1G_03170"/>
<dbReference type="HOGENOM" id="CLU_037404_2_1_5"/>
<dbReference type="UniPathway" id="UPA00219"/>
<dbReference type="Proteomes" id="UP000006832">
    <property type="component" value="Chromosome"/>
</dbReference>
<dbReference type="GO" id="GO:0005886">
    <property type="term" value="C:plasma membrane"/>
    <property type="evidence" value="ECO:0007669"/>
    <property type="project" value="UniProtKB-SubCell"/>
</dbReference>
<dbReference type="GO" id="GO:0051991">
    <property type="term" value="F:UDP-N-acetyl-D-glucosamine:N-acetylmuramoyl-L-alanyl-D-glutamyl-meso-2,6-diaminopimelyl-D-alanyl-D-alanine-diphosphoundecaprenol 4-beta-N-acetylglucosaminlytransferase activity"/>
    <property type="evidence" value="ECO:0007669"/>
    <property type="project" value="RHEA"/>
</dbReference>
<dbReference type="GO" id="GO:0050511">
    <property type="term" value="F:undecaprenyldiphospho-muramoylpentapeptide beta-N-acetylglucosaminyltransferase activity"/>
    <property type="evidence" value="ECO:0007669"/>
    <property type="project" value="UniProtKB-UniRule"/>
</dbReference>
<dbReference type="GO" id="GO:0005975">
    <property type="term" value="P:carbohydrate metabolic process"/>
    <property type="evidence" value="ECO:0007669"/>
    <property type="project" value="InterPro"/>
</dbReference>
<dbReference type="GO" id="GO:0051301">
    <property type="term" value="P:cell division"/>
    <property type="evidence" value="ECO:0007669"/>
    <property type="project" value="UniProtKB-KW"/>
</dbReference>
<dbReference type="GO" id="GO:0071555">
    <property type="term" value="P:cell wall organization"/>
    <property type="evidence" value="ECO:0007669"/>
    <property type="project" value="UniProtKB-KW"/>
</dbReference>
<dbReference type="GO" id="GO:0030259">
    <property type="term" value="P:lipid glycosylation"/>
    <property type="evidence" value="ECO:0007669"/>
    <property type="project" value="UniProtKB-UniRule"/>
</dbReference>
<dbReference type="GO" id="GO:0009252">
    <property type="term" value="P:peptidoglycan biosynthetic process"/>
    <property type="evidence" value="ECO:0007669"/>
    <property type="project" value="UniProtKB-UniRule"/>
</dbReference>
<dbReference type="GO" id="GO:0008360">
    <property type="term" value="P:regulation of cell shape"/>
    <property type="evidence" value="ECO:0007669"/>
    <property type="project" value="UniProtKB-KW"/>
</dbReference>
<dbReference type="CDD" id="cd03785">
    <property type="entry name" value="GT28_MurG"/>
    <property type="match status" value="1"/>
</dbReference>
<dbReference type="Gene3D" id="3.40.50.2000">
    <property type="entry name" value="Glycogen Phosphorylase B"/>
    <property type="match status" value="2"/>
</dbReference>
<dbReference type="HAMAP" id="MF_00033">
    <property type="entry name" value="MurG"/>
    <property type="match status" value="1"/>
</dbReference>
<dbReference type="InterPro" id="IPR006009">
    <property type="entry name" value="GlcNAc_MurG"/>
</dbReference>
<dbReference type="InterPro" id="IPR007235">
    <property type="entry name" value="Glyco_trans_28_C"/>
</dbReference>
<dbReference type="InterPro" id="IPR004276">
    <property type="entry name" value="GlycoTrans_28_N"/>
</dbReference>
<dbReference type="InterPro" id="IPR022439">
    <property type="entry name" value="RPE4"/>
</dbReference>
<dbReference type="NCBIfam" id="TIGR01133">
    <property type="entry name" value="murG"/>
    <property type="match status" value="1"/>
</dbReference>
<dbReference type="NCBIfam" id="TIGR03777">
    <property type="entry name" value="RPE4"/>
    <property type="match status" value="1"/>
</dbReference>
<dbReference type="PANTHER" id="PTHR21015:SF22">
    <property type="entry name" value="GLYCOSYLTRANSFERASE"/>
    <property type="match status" value="1"/>
</dbReference>
<dbReference type="PANTHER" id="PTHR21015">
    <property type="entry name" value="UDP-N-ACETYLGLUCOSAMINE--N-ACETYLMURAMYL-(PENTAPEPTIDE) PYROPHOSPHORYL-UNDECAPRENOL N-ACETYLGLUCOSAMINE TRANSFERASE 1"/>
    <property type="match status" value="1"/>
</dbReference>
<dbReference type="Pfam" id="PF04101">
    <property type="entry name" value="Glyco_tran_28_C"/>
    <property type="match status" value="1"/>
</dbReference>
<dbReference type="Pfam" id="PF03033">
    <property type="entry name" value="Glyco_transf_28"/>
    <property type="match status" value="1"/>
</dbReference>
<dbReference type="SUPFAM" id="SSF53756">
    <property type="entry name" value="UDP-Glycosyltransferase/glycogen phosphorylase"/>
    <property type="match status" value="1"/>
</dbReference>
<name>MURG_RICRS</name>
<organism>
    <name type="scientific">Rickettsia rickettsii (strain Sheila Smith)</name>
    <dbReference type="NCBI Taxonomy" id="392021"/>
    <lineage>
        <taxon>Bacteria</taxon>
        <taxon>Pseudomonadati</taxon>
        <taxon>Pseudomonadota</taxon>
        <taxon>Alphaproteobacteria</taxon>
        <taxon>Rickettsiales</taxon>
        <taxon>Rickettsiaceae</taxon>
        <taxon>Rickettsieae</taxon>
        <taxon>Rickettsia</taxon>
        <taxon>spotted fever group</taxon>
    </lineage>
</organism>
<comment type="function">
    <text evidence="1">Cell wall formation. Catalyzes the transfer of a GlcNAc subunit on undecaprenyl-pyrophosphoryl-MurNAc-pentapeptide (lipid intermediate I) to form undecaprenyl-pyrophosphoryl-MurNAc-(pentapeptide)GlcNAc (lipid intermediate II).</text>
</comment>
<comment type="catalytic activity">
    <reaction evidence="1">
        <text>di-trans,octa-cis-undecaprenyl diphospho-N-acetyl-alpha-D-muramoyl-L-alanyl-D-glutamyl-meso-2,6-diaminopimeloyl-D-alanyl-D-alanine + UDP-N-acetyl-alpha-D-glucosamine = di-trans,octa-cis-undecaprenyl diphospho-[N-acetyl-alpha-D-glucosaminyl-(1-&gt;4)]-N-acetyl-alpha-D-muramoyl-L-alanyl-D-glutamyl-meso-2,6-diaminopimeloyl-D-alanyl-D-alanine + UDP + H(+)</text>
        <dbReference type="Rhea" id="RHEA:31227"/>
        <dbReference type="ChEBI" id="CHEBI:15378"/>
        <dbReference type="ChEBI" id="CHEBI:57705"/>
        <dbReference type="ChEBI" id="CHEBI:58223"/>
        <dbReference type="ChEBI" id="CHEBI:61387"/>
        <dbReference type="ChEBI" id="CHEBI:61388"/>
        <dbReference type="EC" id="2.4.1.227"/>
    </reaction>
</comment>
<comment type="pathway">
    <text evidence="1">Cell wall biogenesis; peptidoglycan biosynthesis.</text>
</comment>
<comment type="subcellular location">
    <subcellularLocation>
        <location evidence="1">Cell inner membrane</location>
        <topology evidence="1">Peripheral membrane protein</topology>
        <orientation evidence="1">Cytoplasmic side</orientation>
    </subcellularLocation>
</comment>
<comment type="similarity">
    <text evidence="1">Belongs to the glycosyltransferase 28 family. MurG subfamily.</text>
</comment>
<accession>A8GRZ6</accession>
<keyword id="KW-0131">Cell cycle</keyword>
<keyword id="KW-0132">Cell division</keyword>
<keyword id="KW-0997">Cell inner membrane</keyword>
<keyword id="KW-1003">Cell membrane</keyword>
<keyword id="KW-0133">Cell shape</keyword>
<keyword id="KW-0961">Cell wall biogenesis/degradation</keyword>
<keyword id="KW-0328">Glycosyltransferase</keyword>
<keyword id="KW-0472">Membrane</keyword>
<keyword id="KW-0573">Peptidoglycan synthesis</keyword>
<keyword id="KW-0808">Transferase</keyword>
<protein>
    <recommendedName>
        <fullName evidence="1">UDP-N-acetylglucosamine--N-acetylmuramyl-(pentapeptide) pyrophosphoryl-undecaprenol N-acetylglucosamine transferase</fullName>
        <ecNumber evidence="1">2.4.1.227</ecNumber>
    </recommendedName>
    <alternativeName>
        <fullName evidence="1">Undecaprenyl-PP-MurNAc-pentapeptide-UDPGlcNAc GlcNAc transferase</fullName>
    </alternativeName>
</protein>
<feature type="chain" id="PRO_1000002685" description="UDP-N-acetylglucosamine--N-acetylmuramyl-(pentapeptide) pyrophosphoryl-undecaprenol N-acetylglucosamine transferase">
    <location>
        <begin position="1"/>
        <end position="376"/>
    </location>
</feature>
<feature type="binding site" evidence="1">
    <location>
        <begin position="11"/>
        <end position="13"/>
    </location>
    <ligand>
        <name>UDP-N-acetyl-alpha-D-glucosamine</name>
        <dbReference type="ChEBI" id="CHEBI:57705"/>
    </ligand>
</feature>
<feature type="binding site" evidence="1">
    <location>
        <position position="117"/>
    </location>
    <ligand>
        <name>UDP-N-acetyl-alpha-D-glucosamine</name>
        <dbReference type="ChEBI" id="CHEBI:57705"/>
    </ligand>
</feature>
<feature type="binding site" evidence="1">
    <location>
        <position position="160"/>
    </location>
    <ligand>
        <name>UDP-N-acetyl-alpha-D-glucosamine</name>
        <dbReference type="ChEBI" id="CHEBI:57705"/>
    </ligand>
</feature>
<feature type="binding site" evidence="1">
    <location>
        <position position="208"/>
    </location>
    <ligand>
        <name>UDP-N-acetyl-alpha-D-glucosamine</name>
        <dbReference type="ChEBI" id="CHEBI:57705"/>
    </ligand>
</feature>
<feature type="binding site" evidence="1">
    <location>
        <position position="310"/>
    </location>
    <ligand>
        <name>UDP-N-acetyl-alpha-D-glucosamine</name>
        <dbReference type="ChEBI" id="CHEBI:57705"/>
    </ligand>
</feature>